<keyword id="KW-0997">Cell inner membrane</keyword>
<keyword id="KW-1003">Cell membrane</keyword>
<keyword id="KW-0472">Membrane</keyword>
<keyword id="KW-1185">Reference proteome</keyword>
<keyword id="KW-0812">Transmembrane</keyword>
<keyword id="KW-1133">Transmembrane helix</keyword>
<accession>Q8FHC6</accession>
<proteinExistence type="inferred from homology"/>
<feature type="chain" id="PRO_0000162330" description="UPF0060 membrane protein YnfA">
    <location>
        <begin position="1"/>
        <end position="108"/>
    </location>
</feature>
<feature type="topological domain" description="Periplasmic" evidence="1">
    <location>
        <begin position="1"/>
        <end position="5"/>
    </location>
</feature>
<feature type="transmembrane region" description="Helical" evidence="1">
    <location>
        <begin position="6"/>
        <end position="26"/>
    </location>
</feature>
<feature type="topological domain" description="Cytoplasmic" evidence="1">
    <location>
        <begin position="27"/>
        <end position="30"/>
    </location>
</feature>
<feature type="transmembrane region" description="Helical" evidence="1">
    <location>
        <begin position="31"/>
        <end position="51"/>
    </location>
</feature>
<feature type="topological domain" description="Periplasmic" evidence="1">
    <location>
        <begin position="52"/>
        <end position="60"/>
    </location>
</feature>
<feature type="transmembrane region" description="Helical" evidence="1">
    <location>
        <begin position="61"/>
        <end position="81"/>
    </location>
</feature>
<feature type="topological domain" description="Cytoplasmic" evidence="1">
    <location>
        <begin position="82"/>
        <end position="84"/>
    </location>
</feature>
<feature type="transmembrane region" description="Helical" evidence="1">
    <location>
        <begin position="85"/>
        <end position="105"/>
    </location>
</feature>
<feature type="topological domain" description="Periplasmic" evidence="1">
    <location>
        <begin position="106"/>
        <end position="108"/>
    </location>
</feature>
<sequence length="108" mass="11901">MIKTTLLFFATALCEIIGCFLPWLWLKRNASIWLLLPAGISLALFVWLLTLHPAASGRVYAAYGGVYVCTALIWLRVVDGVKLTLYDWTGALIALCGMLIIVAGWGRT</sequence>
<name>YNFA_ECOL6</name>
<protein>
    <recommendedName>
        <fullName evidence="1">UPF0060 membrane protein YnfA</fullName>
    </recommendedName>
</protein>
<evidence type="ECO:0000255" key="1">
    <source>
        <dbReference type="HAMAP-Rule" id="MF_00010"/>
    </source>
</evidence>
<evidence type="ECO:0000305" key="2"/>
<gene>
    <name evidence="1" type="primary">ynfA</name>
    <name type="ordered locus">c1972</name>
</gene>
<dbReference type="EMBL" id="AE014075">
    <property type="protein sequence ID" value="AAN80432.1"/>
    <property type="status" value="ALT_INIT"/>
    <property type="molecule type" value="Genomic_DNA"/>
</dbReference>
<dbReference type="RefSeq" id="WP_001304355.1">
    <property type="nucleotide sequence ID" value="NZ_CP051263.1"/>
</dbReference>
<dbReference type="SMR" id="Q8FHC6"/>
<dbReference type="STRING" id="199310.c1972"/>
<dbReference type="KEGG" id="ecc:c1972"/>
<dbReference type="eggNOG" id="COG1742">
    <property type="taxonomic scope" value="Bacteria"/>
</dbReference>
<dbReference type="HOGENOM" id="CLU_117653_2_1_6"/>
<dbReference type="Proteomes" id="UP000001410">
    <property type="component" value="Chromosome"/>
</dbReference>
<dbReference type="GO" id="GO:0005886">
    <property type="term" value="C:plasma membrane"/>
    <property type="evidence" value="ECO:0007669"/>
    <property type="project" value="UniProtKB-SubCell"/>
</dbReference>
<dbReference type="HAMAP" id="MF_00010">
    <property type="entry name" value="UPF0060"/>
    <property type="match status" value="1"/>
</dbReference>
<dbReference type="InterPro" id="IPR003844">
    <property type="entry name" value="UPF0060"/>
</dbReference>
<dbReference type="NCBIfam" id="NF002586">
    <property type="entry name" value="PRK02237.1"/>
    <property type="match status" value="1"/>
</dbReference>
<dbReference type="PANTHER" id="PTHR36116">
    <property type="entry name" value="UPF0060 MEMBRANE PROTEIN YNFA"/>
    <property type="match status" value="1"/>
</dbReference>
<dbReference type="PANTHER" id="PTHR36116:SF1">
    <property type="entry name" value="UPF0060 MEMBRANE PROTEIN YNFA"/>
    <property type="match status" value="1"/>
</dbReference>
<dbReference type="Pfam" id="PF02694">
    <property type="entry name" value="UPF0060"/>
    <property type="match status" value="1"/>
</dbReference>
<dbReference type="SUPFAM" id="SSF103481">
    <property type="entry name" value="Multidrug resistance efflux transporter EmrE"/>
    <property type="match status" value="1"/>
</dbReference>
<comment type="subcellular location">
    <subcellularLocation>
        <location evidence="1">Cell inner membrane</location>
        <topology evidence="1">Multi-pass membrane protein</topology>
    </subcellularLocation>
</comment>
<comment type="similarity">
    <text evidence="1">Belongs to the UPF0060 family.</text>
</comment>
<comment type="sequence caution" evidence="2">
    <conflict type="erroneous initiation">
        <sequence resource="EMBL-CDS" id="AAN80432"/>
    </conflict>
</comment>
<reference key="1">
    <citation type="journal article" date="2002" name="Proc. Natl. Acad. Sci. U.S.A.">
        <title>Extensive mosaic structure revealed by the complete genome sequence of uropathogenic Escherichia coli.</title>
        <authorList>
            <person name="Welch R.A."/>
            <person name="Burland V."/>
            <person name="Plunkett G. III"/>
            <person name="Redford P."/>
            <person name="Roesch P."/>
            <person name="Rasko D."/>
            <person name="Buckles E.L."/>
            <person name="Liou S.-R."/>
            <person name="Boutin A."/>
            <person name="Hackett J."/>
            <person name="Stroud D."/>
            <person name="Mayhew G.F."/>
            <person name="Rose D.J."/>
            <person name="Zhou S."/>
            <person name="Schwartz D.C."/>
            <person name="Perna N.T."/>
            <person name="Mobley H.L.T."/>
            <person name="Donnenberg M.S."/>
            <person name="Blattner F.R."/>
        </authorList>
    </citation>
    <scope>NUCLEOTIDE SEQUENCE [LARGE SCALE GENOMIC DNA]</scope>
    <source>
        <strain>CFT073 / ATCC 700928 / UPEC</strain>
    </source>
</reference>
<organism>
    <name type="scientific">Escherichia coli O6:H1 (strain CFT073 / ATCC 700928 / UPEC)</name>
    <dbReference type="NCBI Taxonomy" id="199310"/>
    <lineage>
        <taxon>Bacteria</taxon>
        <taxon>Pseudomonadati</taxon>
        <taxon>Pseudomonadota</taxon>
        <taxon>Gammaproteobacteria</taxon>
        <taxon>Enterobacterales</taxon>
        <taxon>Enterobacteriaceae</taxon>
        <taxon>Escherichia</taxon>
    </lineage>
</organism>